<dbReference type="EC" id="2.5.1.n9" evidence="1"/>
<dbReference type="EMBL" id="CP001283">
    <property type="protein sequence ID" value="ACK88455.1"/>
    <property type="molecule type" value="Genomic_DNA"/>
</dbReference>
<dbReference type="RefSeq" id="WP_000272089.1">
    <property type="nucleotide sequence ID" value="NC_011773.1"/>
</dbReference>
<dbReference type="SMR" id="B7JM94"/>
<dbReference type="KEGG" id="bcu:BCAH820_0335"/>
<dbReference type="HOGENOM" id="CLU_095211_0_0_9"/>
<dbReference type="UniPathway" id="UPA00940"/>
<dbReference type="Proteomes" id="UP000001363">
    <property type="component" value="Chromosome"/>
</dbReference>
<dbReference type="GO" id="GO:0120536">
    <property type="term" value="F:heptaprenylglyceryl phosphate synthase activity"/>
    <property type="evidence" value="ECO:0007669"/>
    <property type="project" value="RHEA"/>
</dbReference>
<dbReference type="GO" id="GO:0000287">
    <property type="term" value="F:magnesium ion binding"/>
    <property type="evidence" value="ECO:0007669"/>
    <property type="project" value="UniProtKB-UniRule"/>
</dbReference>
<dbReference type="GO" id="GO:0046474">
    <property type="term" value="P:glycerophospholipid biosynthetic process"/>
    <property type="evidence" value="ECO:0007669"/>
    <property type="project" value="UniProtKB-UniRule"/>
</dbReference>
<dbReference type="CDD" id="cd02812">
    <property type="entry name" value="PcrB_like"/>
    <property type="match status" value="1"/>
</dbReference>
<dbReference type="FunFam" id="3.20.20.390:FF:000001">
    <property type="entry name" value="Heptaprenylglyceryl phosphate synthase"/>
    <property type="match status" value="1"/>
</dbReference>
<dbReference type="Gene3D" id="3.20.20.390">
    <property type="entry name" value="FMN-linked oxidoreductases"/>
    <property type="match status" value="1"/>
</dbReference>
<dbReference type="HAMAP" id="MF_00112">
    <property type="entry name" value="GGGP_HepGP_synthase"/>
    <property type="match status" value="1"/>
</dbReference>
<dbReference type="InterPro" id="IPR039074">
    <property type="entry name" value="GGGP/HepGP_synthase_I"/>
</dbReference>
<dbReference type="InterPro" id="IPR038597">
    <property type="entry name" value="GGGP/HepGP_synthase_sf"/>
</dbReference>
<dbReference type="InterPro" id="IPR008205">
    <property type="entry name" value="GGGP_HepGP_synthase"/>
</dbReference>
<dbReference type="NCBIfam" id="TIGR01768">
    <property type="entry name" value="GGGP-family"/>
    <property type="match status" value="1"/>
</dbReference>
<dbReference type="NCBIfam" id="NF003197">
    <property type="entry name" value="PRK04169.1-1"/>
    <property type="match status" value="1"/>
</dbReference>
<dbReference type="NCBIfam" id="NF003199">
    <property type="entry name" value="PRK04169.1-3"/>
    <property type="match status" value="1"/>
</dbReference>
<dbReference type="PANTHER" id="PTHR40029">
    <property type="match status" value="1"/>
</dbReference>
<dbReference type="PANTHER" id="PTHR40029:SF2">
    <property type="entry name" value="HEPTAPRENYLGLYCERYL PHOSPHATE SYNTHASE"/>
    <property type="match status" value="1"/>
</dbReference>
<dbReference type="Pfam" id="PF01884">
    <property type="entry name" value="PcrB"/>
    <property type="match status" value="1"/>
</dbReference>
<dbReference type="SUPFAM" id="SSF51395">
    <property type="entry name" value="FMN-linked oxidoreductases"/>
    <property type="match status" value="1"/>
</dbReference>
<keyword id="KW-0444">Lipid biosynthesis</keyword>
<keyword id="KW-0443">Lipid metabolism</keyword>
<keyword id="KW-0460">Magnesium</keyword>
<keyword id="KW-0479">Metal-binding</keyword>
<keyword id="KW-0594">Phospholipid biosynthesis</keyword>
<keyword id="KW-1208">Phospholipid metabolism</keyword>
<keyword id="KW-0808">Transferase</keyword>
<organism>
    <name type="scientific">Bacillus cereus (strain AH820)</name>
    <dbReference type="NCBI Taxonomy" id="405535"/>
    <lineage>
        <taxon>Bacteria</taxon>
        <taxon>Bacillati</taxon>
        <taxon>Bacillota</taxon>
        <taxon>Bacilli</taxon>
        <taxon>Bacillales</taxon>
        <taxon>Bacillaceae</taxon>
        <taxon>Bacillus</taxon>
        <taxon>Bacillus cereus group</taxon>
    </lineage>
</organism>
<name>PCRB_BACC0</name>
<comment type="function">
    <text evidence="1">Prenyltransferase that catalyzes in vivo the transfer of the heptaprenyl moiety of heptaprenyl pyrophosphate (HepPP; 35 carbon atoms) to the C3 hydroxyl of sn-glycerol-1-phosphate (G1P), producing heptaprenylglyceryl phosphate (HepGP). This reaction is an ether-bond-formation step in the biosynthesis of archaea-type G1P-based membrane lipids found in Bacillales.</text>
</comment>
<comment type="catalytic activity">
    <reaction evidence="1">
        <text>sn-glycerol 1-phosphate + all-trans-heptaprenyl diphosphate = 3-heptaprenyl-sn-glycero-1-phosphate + diphosphate</text>
        <dbReference type="Rhea" id="RHEA:33495"/>
        <dbReference type="ChEBI" id="CHEBI:33019"/>
        <dbReference type="ChEBI" id="CHEBI:57685"/>
        <dbReference type="ChEBI" id="CHEBI:58206"/>
        <dbReference type="ChEBI" id="CHEBI:64781"/>
        <dbReference type="EC" id="2.5.1.n9"/>
    </reaction>
</comment>
<comment type="cofactor">
    <cofactor evidence="1">
        <name>Mg(2+)</name>
        <dbReference type="ChEBI" id="CHEBI:18420"/>
    </cofactor>
</comment>
<comment type="pathway">
    <text evidence="1">Membrane lipid metabolism; glycerophospholipid metabolism.</text>
</comment>
<comment type="subunit">
    <text evidence="1">Homodimer.</text>
</comment>
<comment type="similarity">
    <text evidence="1">Belongs to the GGGP/HepGP synthase family. Group I subfamily.</text>
</comment>
<accession>B7JM94</accession>
<proteinExistence type="inferred from homology"/>
<gene>
    <name evidence="1" type="primary">pcrB</name>
    <name type="ordered locus">BCAH820_0335</name>
</gene>
<evidence type="ECO:0000255" key="1">
    <source>
        <dbReference type="HAMAP-Rule" id="MF_00112"/>
    </source>
</evidence>
<feature type="chain" id="PRO_1000117515" description="Heptaprenylglyceryl phosphate synthase">
    <location>
        <begin position="1"/>
        <end position="229"/>
    </location>
</feature>
<feature type="binding site" evidence="1">
    <location>
        <position position="12"/>
    </location>
    <ligand>
        <name>sn-glycerol 1-phosphate</name>
        <dbReference type="ChEBI" id="CHEBI:57685"/>
    </ligand>
</feature>
<feature type="binding site" evidence="1">
    <location>
        <position position="14"/>
    </location>
    <ligand>
        <name>Mg(2+)</name>
        <dbReference type="ChEBI" id="CHEBI:18420"/>
    </ligand>
</feature>
<feature type="binding site" evidence="1">
    <location>
        <position position="40"/>
    </location>
    <ligand>
        <name>Mg(2+)</name>
        <dbReference type="ChEBI" id="CHEBI:18420"/>
    </ligand>
</feature>
<feature type="binding site" evidence="1">
    <location>
        <begin position="159"/>
        <end position="164"/>
    </location>
    <ligand>
        <name>sn-glycerol 1-phosphate</name>
        <dbReference type="ChEBI" id="CHEBI:57685"/>
    </ligand>
</feature>
<feature type="binding site" evidence="1">
    <location>
        <position position="189"/>
    </location>
    <ligand>
        <name>sn-glycerol 1-phosphate</name>
        <dbReference type="ChEBI" id="CHEBI:57685"/>
    </ligand>
</feature>
<feature type="binding site" evidence="1">
    <location>
        <begin position="209"/>
        <end position="210"/>
    </location>
    <ligand>
        <name>sn-glycerol 1-phosphate</name>
        <dbReference type="ChEBI" id="CHEBI:57685"/>
    </ligand>
</feature>
<reference key="1">
    <citation type="submission" date="2008-10" db="EMBL/GenBank/DDBJ databases">
        <title>Genome sequence of Bacillus cereus AH820.</title>
        <authorList>
            <person name="Dodson R.J."/>
            <person name="Durkin A.S."/>
            <person name="Rosovitz M.J."/>
            <person name="Rasko D.A."/>
            <person name="Hoffmaster A."/>
            <person name="Ravel J."/>
            <person name="Sutton G."/>
        </authorList>
    </citation>
    <scope>NUCLEOTIDE SEQUENCE [LARGE SCALE GENOMIC DNA]</scope>
    <source>
        <strain>AH820</strain>
    </source>
</reference>
<protein>
    <recommendedName>
        <fullName evidence="1">Heptaprenylglyceryl phosphate synthase</fullName>
        <shortName evidence="1">HepGP synthase</shortName>
        <ecNumber evidence="1">2.5.1.n9</ecNumber>
    </recommendedName>
    <alternativeName>
        <fullName evidence="1">Glycerol-1-phosphate heptaprenyltransferase</fullName>
    </alternativeName>
</protein>
<sequence length="229" mass="25518">MYDISGWKHVFKLDPNKELSDEHLEMICESGTDAVIVGGSDGVTIDNVLHMLVSIRRYAVPCVLEVSDVEAITPGFDFYYIPSVLNSRKVEWVTGVHHEALKEFGDIMDWDEIFMEGYCVLNPEAKVAQLTDAKCDVTEDDVIAYARLADKLLRLPIFYLEYSGTYGDVELVKNVKAELKQAKLYYGGGISNAEQAKEMAQHADTVVVGNIIYDDIKAALKTVKAVKGE</sequence>